<keyword id="KW-0007">Acetylation</keyword>
<keyword id="KW-0009">Actin-binding</keyword>
<keyword id="KW-0966">Cell projection</keyword>
<keyword id="KW-0970">Cilium biogenesis/degradation</keyword>
<keyword id="KW-0963">Cytoplasm</keyword>
<keyword id="KW-0206">Cytoskeleton</keyword>
<keyword id="KW-0597">Phosphoprotein</keyword>
<keyword id="KW-1185">Reference proteome</keyword>
<keyword id="KW-0677">Repeat</keyword>
<evidence type="ECO:0000250" key="1"/>
<evidence type="ECO:0000250" key="2">
    <source>
        <dbReference type="UniProtKB" id="Q6IBS0"/>
    </source>
</evidence>
<evidence type="ECO:0000255" key="3">
    <source>
        <dbReference type="PROSITE-ProRule" id="PRU00599"/>
    </source>
</evidence>
<evidence type="ECO:0000256" key="4">
    <source>
        <dbReference type="SAM" id="MobiDB-lite"/>
    </source>
</evidence>
<evidence type="ECO:0000305" key="5"/>
<gene>
    <name type="primary">TWF2</name>
</gene>
<sequence>ATEELKEFFAKARAGSVRLIKVVIEDEQLVLGASQEPVGRWDRDYDRAVLPLLDAQQPCYLLYRLDSQNAQGFEWLFLAWSPDNSPVRLKMLYAATRATVKKEFGGGHIKDELFGTVKDDLSFAGYQKHLSSCAAPAPLTSAERELQQIRINEVKTEISVESKHQTLQGLAFPLQPEAQRALQQLKQKMVNYIQMKLDLERETIELVHTESTDVAQLPSRVPRDAARYHFFLYKHTHEGDLLESVVFIYSMPGYKCSIEERMLYSSCKSRLLDSVEQDFHLEIAKKIEIGDGAELTAEFLYDEVHPKQHAFKQAFAKPKGPGGKRGHKRLIRGPGENGDDS</sequence>
<proteinExistence type="inferred from homology"/>
<accession>Q5RFH1</accession>
<protein>
    <recommendedName>
        <fullName>Twinfilin-2</fullName>
    </recommendedName>
</protein>
<comment type="function">
    <text evidence="1">Actin-binding protein involved in motile and morphological processes. Inhibits actin polymerization, likely by sequestering G-actin. By capping the barbed ends of filaments, it also regulates motility. Seems to play an important role in clathrin-mediated endocytosis and distribution of endocytic organelles. May play a role in regulating the mature length of the middle and short rows of stereocilia (By similarity).</text>
</comment>
<comment type="subunit">
    <text evidence="1">Interacts with G-actin; ADP-actin form and capping protein (CP). May also be able to interact with TWF1 and phosphoinositides, PI(4,5)P2. When bound to PI(4,5)P2, it is down-regulated. Interacts with MYO7A (By similarity).</text>
</comment>
<comment type="subcellular location">
    <subcellularLocation>
        <location evidence="1">Cytoplasm</location>
        <location evidence="1">Cytoskeleton</location>
    </subcellularLocation>
    <subcellularLocation>
        <location evidence="1">Cytoplasm</location>
        <location evidence="1">Perinuclear region</location>
    </subcellularLocation>
    <subcellularLocation>
        <location evidence="1">Cell projection</location>
        <location evidence="1">Stereocilium</location>
    </subcellularLocation>
    <text evidence="1">Perinuclear and G-actin-rich cortical actin structure sublocalization.</text>
</comment>
<comment type="PTM">
    <text evidence="1">Phosphorylated on both serine and threonine residues.</text>
</comment>
<comment type="similarity">
    <text evidence="5">Belongs to the actin-binding proteins ADF family. Twinfilin subfamily.</text>
</comment>
<comment type="online information" name="Protein Spotlight">
    <link uri="https://www.proteinspotlight.org/back_issues/073"/>
    <text>Molecular embrace - Issue 73 of August 2006</text>
</comment>
<dbReference type="EMBL" id="CR857187">
    <property type="protein sequence ID" value="CAH89486.1"/>
    <property type="molecule type" value="Transcribed_RNA"/>
</dbReference>
<dbReference type="SMR" id="Q5RFH1"/>
<dbReference type="FunCoup" id="Q5RFH1">
    <property type="interactions" value="567"/>
</dbReference>
<dbReference type="STRING" id="9601.ENSPPYP00000015459"/>
<dbReference type="eggNOG" id="KOG1747">
    <property type="taxonomic scope" value="Eukaryota"/>
</dbReference>
<dbReference type="InParanoid" id="Q5RFH1"/>
<dbReference type="Proteomes" id="UP000001595">
    <property type="component" value="Unplaced"/>
</dbReference>
<dbReference type="GO" id="GO:0005884">
    <property type="term" value="C:actin filament"/>
    <property type="evidence" value="ECO:0007669"/>
    <property type="project" value="TreeGrafter"/>
</dbReference>
<dbReference type="GO" id="GO:0030016">
    <property type="term" value="C:myofibril"/>
    <property type="evidence" value="ECO:0007669"/>
    <property type="project" value="TreeGrafter"/>
</dbReference>
<dbReference type="GO" id="GO:0048471">
    <property type="term" value="C:perinuclear region of cytoplasm"/>
    <property type="evidence" value="ECO:0007669"/>
    <property type="project" value="UniProtKB-SubCell"/>
</dbReference>
<dbReference type="GO" id="GO:0032420">
    <property type="term" value="C:stereocilium"/>
    <property type="evidence" value="ECO:0007669"/>
    <property type="project" value="UniProtKB-SubCell"/>
</dbReference>
<dbReference type="GO" id="GO:0051015">
    <property type="term" value="F:actin filament binding"/>
    <property type="evidence" value="ECO:0007669"/>
    <property type="project" value="TreeGrafter"/>
</dbReference>
<dbReference type="GO" id="GO:0003785">
    <property type="term" value="F:actin monomer binding"/>
    <property type="evidence" value="ECO:0007669"/>
    <property type="project" value="TreeGrafter"/>
</dbReference>
<dbReference type="GO" id="GO:0030042">
    <property type="term" value="P:actin filament depolymerization"/>
    <property type="evidence" value="ECO:0007669"/>
    <property type="project" value="TreeGrafter"/>
</dbReference>
<dbReference type="GO" id="GO:0051016">
    <property type="term" value="P:barbed-end actin filament capping"/>
    <property type="evidence" value="ECO:0007669"/>
    <property type="project" value="TreeGrafter"/>
</dbReference>
<dbReference type="GO" id="GO:0030030">
    <property type="term" value="P:cell projection organization"/>
    <property type="evidence" value="ECO:0007669"/>
    <property type="project" value="UniProtKB-KW"/>
</dbReference>
<dbReference type="GO" id="GO:0010976">
    <property type="term" value="P:positive regulation of neuron projection development"/>
    <property type="evidence" value="ECO:0007669"/>
    <property type="project" value="TreeGrafter"/>
</dbReference>
<dbReference type="GO" id="GO:0010591">
    <property type="term" value="P:regulation of lamellipodium assembly"/>
    <property type="evidence" value="ECO:0007669"/>
    <property type="project" value="TreeGrafter"/>
</dbReference>
<dbReference type="CDD" id="cd11284">
    <property type="entry name" value="ADF_Twf-C_like"/>
    <property type="match status" value="1"/>
</dbReference>
<dbReference type="CDD" id="cd11285">
    <property type="entry name" value="ADF_Twf-N_like"/>
    <property type="match status" value="1"/>
</dbReference>
<dbReference type="FunFam" id="3.40.20.10:FF:000007">
    <property type="entry name" value="Twinfilin-1 isoform 1"/>
    <property type="match status" value="1"/>
</dbReference>
<dbReference type="FunFam" id="3.40.20.10:FF:000012">
    <property type="entry name" value="Twinfilin-1 isoform 1"/>
    <property type="match status" value="1"/>
</dbReference>
<dbReference type="Gene3D" id="3.40.20.10">
    <property type="entry name" value="Severin"/>
    <property type="match status" value="2"/>
</dbReference>
<dbReference type="InterPro" id="IPR002108">
    <property type="entry name" value="ADF-H"/>
</dbReference>
<dbReference type="InterPro" id="IPR029006">
    <property type="entry name" value="ADF-H/Gelsolin-like_dom_sf"/>
</dbReference>
<dbReference type="InterPro" id="IPR028458">
    <property type="entry name" value="Twinfilin"/>
</dbReference>
<dbReference type="PANTHER" id="PTHR13759">
    <property type="entry name" value="TWINFILIN"/>
    <property type="match status" value="1"/>
</dbReference>
<dbReference type="PANTHER" id="PTHR13759:SF9">
    <property type="entry name" value="TWINFILIN-2"/>
    <property type="match status" value="1"/>
</dbReference>
<dbReference type="Pfam" id="PF00241">
    <property type="entry name" value="Cofilin_ADF"/>
    <property type="match status" value="2"/>
</dbReference>
<dbReference type="SMART" id="SM00102">
    <property type="entry name" value="ADF"/>
    <property type="match status" value="2"/>
</dbReference>
<dbReference type="SUPFAM" id="SSF55753">
    <property type="entry name" value="Actin depolymerizing proteins"/>
    <property type="match status" value="2"/>
</dbReference>
<dbReference type="PROSITE" id="PS51263">
    <property type="entry name" value="ADF_H"/>
    <property type="match status" value="2"/>
</dbReference>
<feature type="chain" id="PRO_0000233138" description="Twinfilin-2">
    <location>
        <begin position="1" status="less than"/>
        <end position="341"/>
    </location>
</feature>
<feature type="domain" description="ADF-H 1" evidence="3">
    <location>
        <begin position="1" status="less than"/>
        <end position="131"/>
    </location>
</feature>
<feature type="domain" description="ADF-H 2" evidence="3">
    <location>
        <begin position="169"/>
        <end position="305"/>
    </location>
</feature>
<feature type="region of interest" description="Disordered" evidence="4">
    <location>
        <begin position="314"/>
        <end position="341"/>
    </location>
</feature>
<feature type="compositionally biased region" description="Basic residues" evidence="4">
    <location>
        <begin position="322"/>
        <end position="331"/>
    </location>
</feature>
<feature type="modified residue" description="N6-acetyllysine" evidence="2">
    <location>
        <position position="6"/>
    </location>
</feature>
<feature type="modified residue" description="Phosphotyrosine" evidence="2">
    <location>
        <position position="301"/>
    </location>
</feature>
<feature type="modified residue" description="Phosphoserine" evidence="2">
    <location>
        <position position="341"/>
    </location>
</feature>
<feature type="non-terminal residue">
    <location>
        <position position="1"/>
    </location>
</feature>
<organism>
    <name type="scientific">Pongo abelii</name>
    <name type="common">Sumatran orangutan</name>
    <name type="synonym">Pongo pygmaeus abelii</name>
    <dbReference type="NCBI Taxonomy" id="9601"/>
    <lineage>
        <taxon>Eukaryota</taxon>
        <taxon>Metazoa</taxon>
        <taxon>Chordata</taxon>
        <taxon>Craniata</taxon>
        <taxon>Vertebrata</taxon>
        <taxon>Euteleostomi</taxon>
        <taxon>Mammalia</taxon>
        <taxon>Eutheria</taxon>
        <taxon>Euarchontoglires</taxon>
        <taxon>Primates</taxon>
        <taxon>Haplorrhini</taxon>
        <taxon>Catarrhini</taxon>
        <taxon>Hominidae</taxon>
        <taxon>Pongo</taxon>
    </lineage>
</organism>
<name>TWF2_PONAB</name>
<reference key="1">
    <citation type="submission" date="2004-11" db="EMBL/GenBank/DDBJ databases">
        <authorList>
            <consortium name="The German cDNA consortium"/>
        </authorList>
    </citation>
    <scope>NUCLEOTIDE SEQUENCE [LARGE SCALE MRNA]</scope>
    <source>
        <tissue>Heart</tissue>
    </source>
</reference>